<organism>
    <name type="scientific">Chlamydia pneumoniae</name>
    <name type="common">Chlamydophila pneumoniae</name>
    <dbReference type="NCBI Taxonomy" id="83558"/>
    <lineage>
        <taxon>Bacteria</taxon>
        <taxon>Pseudomonadati</taxon>
        <taxon>Chlamydiota</taxon>
        <taxon>Chlamydiia</taxon>
        <taxon>Chlamydiales</taxon>
        <taxon>Chlamydiaceae</taxon>
        <taxon>Chlamydia/Chlamydophila group</taxon>
        <taxon>Chlamydia</taxon>
    </lineage>
</organism>
<dbReference type="EMBL" id="AE001363">
    <property type="protein sequence ID" value="AAD18588.1"/>
    <property type="molecule type" value="Genomic_DNA"/>
</dbReference>
<dbReference type="EMBL" id="AE002161">
    <property type="protein sequence ID" value="AAF38166.1"/>
    <property type="molecule type" value="Genomic_DNA"/>
</dbReference>
<dbReference type="EMBL" id="BA000008">
    <property type="protein sequence ID" value="BAA98652.1"/>
    <property type="molecule type" value="Genomic_DNA"/>
</dbReference>
<dbReference type="EMBL" id="AE009440">
    <property type="protein sequence ID" value="AAP98391.1"/>
    <property type="molecule type" value="Genomic_DNA"/>
</dbReference>
<dbReference type="PIR" id="B72078">
    <property type="entry name" value="B72078"/>
</dbReference>
<dbReference type="PIR" id="B86546">
    <property type="entry name" value="B86546"/>
</dbReference>
<dbReference type="PIR" id="C81591">
    <property type="entry name" value="C81591"/>
</dbReference>
<dbReference type="RefSeq" id="NP_224644.1">
    <property type="nucleotide sequence ID" value="NC_000922.1"/>
</dbReference>
<dbReference type="RefSeq" id="WP_010883087.1">
    <property type="nucleotide sequence ID" value="NZ_LN847257.1"/>
</dbReference>
<dbReference type="RefSeq" id="WP_010892030.1">
    <property type="nucleotide sequence ID" value="NZ_LN846995.1"/>
</dbReference>
<dbReference type="STRING" id="406984.CPK_ORF00956"/>
<dbReference type="GeneID" id="45050491"/>
<dbReference type="KEGG" id="cpa:CP_0309"/>
<dbReference type="KEGG" id="cpj:pmp_6"/>
<dbReference type="KEGG" id="cpn:CPn_0444"/>
<dbReference type="KEGG" id="cpt:CpB0460"/>
<dbReference type="PATRIC" id="fig|115713.3.peg.492"/>
<dbReference type="eggNOG" id="COG3210">
    <property type="taxonomic scope" value="Bacteria"/>
</dbReference>
<dbReference type="HOGENOM" id="CLU_247701_0_0_0"/>
<dbReference type="OrthoDB" id="16745at2"/>
<dbReference type="Proteomes" id="UP000000583">
    <property type="component" value="Chromosome"/>
</dbReference>
<dbReference type="Proteomes" id="UP000000801">
    <property type="component" value="Chromosome"/>
</dbReference>
<dbReference type="GO" id="GO:0009279">
    <property type="term" value="C:cell outer membrane"/>
    <property type="evidence" value="ECO:0007669"/>
    <property type="project" value="UniProtKB-SubCell"/>
</dbReference>
<dbReference type="GO" id="GO:0005576">
    <property type="term" value="C:extracellular region"/>
    <property type="evidence" value="ECO:0007669"/>
    <property type="project" value="UniProtKB-KW"/>
</dbReference>
<dbReference type="Gene3D" id="2.40.128.130">
    <property type="entry name" value="Autotransporter beta-domain"/>
    <property type="match status" value="1"/>
</dbReference>
<dbReference type="InterPro" id="IPR005546">
    <property type="entry name" value="Autotransporte_beta"/>
</dbReference>
<dbReference type="InterPro" id="IPR036709">
    <property type="entry name" value="Autotransporte_beta_dom_sf"/>
</dbReference>
<dbReference type="InterPro" id="IPR006626">
    <property type="entry name" value="PbH1"/>
</dbReference>
<dbReference type="InterPro" id="IPR011427">
    <property type="entry name" value="Polymorphic_membr_middle"/>
</dbReference>
<dbReference type="InterPro" id="IPR003368">
    <property type="entry name" value="POMP_repeat"/>
</dbReference>
<dbReference type="NCBIfam" id="TIGR01376">
    <property type="entry name" value="POMP_repeat"/>
    <property type="match status" value="10"/>
</dbReference>
<dbReference type="PANTHER" id="PTHR11319">
    <property type="entry name" value="G PROTEIN-COUPLED RECEPTOR-RELATED"/>
    <property type="match status" value="1"/>
</dbReference>
<dbReference type="PANTHER" id="PTHR11319:SF35">
    <property type="entry name" value="OUTER MEMBRANE PROTEIN PMPC-RELATED"/>
    <property type="match status" value="1"/>
</dbReference>
<dbReference type="Pfam" id="PF02415">
    <property type="entry name" value="Chlam_PMP"/>
    <property type="match status" value="8"/>
</dbReference>
<dbReference type="Pfam" id="PF07548">
    <property type="entry name" value="ChlamPMP_M"/>
    <property type="match status" value="1"/>
</dbReference>
<dbReference type="SMART" id="SM00869">
    <property type="entry name" value="Autotransporter"/>
    <property type="match status" value="1"/>
</dbReference>
<dbReference type="SMART" id="SM00710">
    <property type="entry name" value="PbH1"/>
    <property type="match status" value="10"/>
</dbReference>
<dbReference type="SUPFAM" id="SSF103515">
    <property type="entry name" value="Autotransporter"/>
    <property type="match status" value="1"/>
</dbReference>
<dbReference type="PROSITE" id="PS51208">
    <property type="entry name" value="AUTOTRANSPORTER"/>
    <property type="match status" value="1"/>
</dbReference>
<feature type="signal peptide" evidence="1">
    <location>
        <begin position="1"/>
        <end position="23"/>
    </location>
</feature>
<feature type="chain" id="PRO_0000024736" description="Probable outer membrane protein pmp6">
    <location>
        <begin position="24"/>
        <end position="1276"/>
    </location>
</feature>
<feature type="domain" description="Autotransporter" evidence="2">
    <location>
        <begin position="981"/>
        <end position="1276"/>
    </location>
</feature>
<feature type="sequence conflict" description="In Ref. 1 and 4." evidence="3" ref="1 4">
    <original>E</original>
    <variation>EGCGGAILAFIDSGSVSDKTGLSIANNQEVSLTSNAATVSGGAIYATKCTLTGNGSLTFDGNTAGTSGGAIYTETEDFTLTGSTGTVTFSTNTAKTGGALYSKGNNSLSGNTNLLFSGNKATGPSNSSANQE</variation>
    <location>
        <position position="421"/>
    </location>
</feature>
<reference key="1">
    <citation type="journal article" date="1999" name="Nat. Genet.">
        <title>Comparative genomes of Chlamydia pneumoniae and C. trachomatis.</title>
        <authorList>
            <person name="Kalman S."/>
            <person name="Mitchell W.P."/>
            <person name="Marathe R."/>
            <person name="Lammel C.J."/>
            <person name="Fan J."/>
            <person name="Hyman R.W."/>
            <person name="Olinger L."/>
            <person name="Grimwood J."/>
            <person name="Davis R.W."/>
            <person name="Stephens R.S."/>
        </authorList>
    </citation>
    <scope>NUCLEOTIDE SEQUENCE [LARGE SCALE GENOMIC DNA]</scope>
    <source>
        <strain>CWL029</strain>
    </source>
</reference>
<reference key="2">
    <citation type="journal article" date="2000" name="Nucleic Acids Res.">
        <title>Genome sequences of Chlamydia trachomatis MoPn and Chlamydia pneumoniae AR39.</title>
        <authorList>
            <person name="Read T.D."/>
            <person name="Brunham R.C."/>
            <person name="Shen C."/>
            <person name="Gill S.R."/>
            <person name="Heidelberg J.F."/>
            <person name="White O."/>
            <person name="Hickey E.K."/>
            <person name="Peterson J.D."/>
            <person name="Utterback T.R."/>
            <person name="Berry K.J."/>
            <person name="Bass S."/>
            <person name="Linher K.D."/>
            <person name="Weidman J.F."/>
            <person name="Khouri H.M."/>
            <person name="Craven B."/>
            <person name="Bowman C."/>
            <person name="Dodson R.J."/>
            <person name="Gwinn M.L."/>
            <person name="Nelson W.C."/>
            <person name="DeBoy R.T."/>
            <person name="Kolonay J.F."/>
            <person name="McClarty G."/>
            <person name="Salzberg S.L."/>
            <person name="Eisen J.A."/>
            <person name="Fraser C.M."/>
        </authorList>
    </citation>
    <scope>NUCLEOTIDE SEQUENCE [LARGE SCALE GENOMIC DNA]</scope>
    <source>
        <strain>AR39</strain>
    </source>
</reference>
<reference key="3">
    <citation type="journal article" date="2000" name="Nucleic Acids Res.">
        <title>Comparison of whole genome sequences of Chlamydia pneumoniae J138 from Japan and CWL029 from USA.</title>
        <authorList>
            <person name="Shirai M."/>
            <person name="Hirakawa H."/>
            <person name="Kimoto M."/>
            <person name="Tabuchi M."/>
            <person name="Kishi F."/>
            <person name="Ouchi K."/>
            <person name="Shiba T."/>
            <person name="Ishii K."/>
            <person name="Hattori M."/>
            <person name="Kuhara S."/>
            <person name="Nakazawa T."/>
        </authorList>
    </citation>
    <scope>NUCLEOTIDE SEQUENCE [LARGE SCALE GENOMIC DNA]</scope>
    <source>
        <strain>J138</strain>
    </source>
</reference>
<reference key="4">
    <citation type="submission" date="2002-05" db="EMBL/GenBank/DDBJ databases">
        <title>The genome sequence of Chlamydia pneumoniae TW183 and comparison with other Chlamydia strains based on whole genome sequence analysis.</title>
        <authorList>
            <person name="Geng M.M."/>
            <person name="Schuhmacher A."/>
            <person name="Muehldorfer I."/>
            <person name="Bensch K.W."/>
            <person name="Schaefer K.P."/>
            <person name="Schneider S."/>
            <person name="Pohl T."/>
            <person name="Essig A."/>
            <person name="Marre R."/>
            <person name="Melchers K."/>
        </authorList>
    </citation>
    <scope>NUCLEOTIDE SEQUENCE [LARGE SCALE GENOMIC DNA]</scope>
    <source>
        <strain>TW-183</strain>
    </source>
</reference>
<sequence length="1276" mass="132127">MKYSLPWLLTSSALVFSLHPLMAANTDLSSSDNYENGSSGSAAFTAKETSDASGTTYTLTSDVSITNVSAITPADKSCFTNTGGALSFVGADHSLVLQTIALTHDGAAINNTNTALSFSGFSSLLIDSAPATGTSGGKGAICVTNTEGGTATFTDNASVTLQKNTSEKDGAAVSAYSIDLAKTTTAALLDQNTSTKNGGALCSTANTTVQGNSGTVTFSSNTATDKGGGIYSKEKDSTLDANTGVVTFKSNTAKTGGAWSSDDNLALTGNTQVLFQENKTTGSAAQANNPEGCGGAICCYLATATDKTGLAISQNQEMSFTSNTTTANGGAIYATKCTLDGNTTLTFDQNTATAGCGGAIYTETEDFSLKGSTGTVTFSTNTAKTGGALYSKGNSSLTGNTNLLFSGNKATGPSNSSANQEGCGGAILSFLESASVSTKKGLWIEDNENVSLSGNTATVSGGAIYATKCALHGNTTLTFDGNTAETAGGAIYTETEDFTLTGSTGTVTFSTNTAKTAGALHTKGNTSFTKNKALVFSGNSATATATTTTDQEGCGGAILCNISESDIATKSLTLTENESLSFINNTAKRSGGGIYAPKCVISGSESINFDGNTAETSGGAIYSKNLSITANGPVSFTNNSGGKGGAIYIADSGELSLEAIDGDITFSGNRATEGTSTPNSIHLGAGAKITKLAAAPGHTIYFYDPITMEAPASGGTIEELVINPVVKAIVPPPQPKNGPIASVPVVPVAPANPNTGTIVFSSGKLPSQDASIPANTTTILNQKINLAGGNVVLKEGATLQVYSFTQQPDSTVFMDAGTTLETTTTNNTDGSIDLKNLSVNLDALDGKRMITIAVNSTSGGLKISGDLKFHNNEGSFYDNPGLKANLNLPFLDLSSTSGTVNLDDFNPIPSSMAAPDYGYQGSWTLVPKVGAGGKVTLVAEWQALGYTPKPELRATLVPNSLWNAYVNIHSIQQEIATAMSDAPSHPGIWIGGIGNAFHQDKQKENAGFRLISRGYIVGGSMTTPQEYTFAVAFSQLFGKSKDYVVSDIKSQVYAGSLCAQSSYVIPLHSSLRRHVLSKVLPELPGETPLVLHGQVSYGRNHHNMTTKLANNTQGKSDWDSHSFAVEVGGSLPVDLNYRYLTSYSPYVKLQVVSVNQKGFQEVAADPRIFDASHLVNVSIPMGLTFKHESAKPPSALLLTLGYAVDAYRDHPHCLTSLTNGTSWSTFATNLSRQAFFAEASGHLKLLHGLDCFASGSCELRSSSRSYNANCGTRYSF</sequence>
<evidence type="ECO:0000255" key="1"/>
<evidence type="ECO:0000255" key="2">
    <source>
        <dbReference type="PROSITE-ProRule" id="PRU00556"/>
    </source>
</evidence>
<evidence type="ECO:0000305" key="3"/>
<accession>Q9Z899</accession>
<accession>Q9JRW2</accession>
<comment type="subcellular location">
    <subcellularLocation>
        <location>Secreted</location>
        <location>Cell wall</location>
    </subcellularLocation>
    <subcellularLocation>
        <location evidence="3">Cell outer membrane</location>
        <topology evidence="3">Peripheral membrane protein</topology>
        <orientation evidence="3">Extracellular side</orientation>
    </subcellularLocation>
</comment>
<comment type="developmental stage">
    <text>Elementary body.</text>
</comment>
<comment type="similarity">
    <text evidence="3">Belongs to the PMP outer membrane protein family.</text>
</comment>
<proteinExistence type="evidence at transcript level"/>
<keyword id="KW-0998">Cell outer membrane</keyword>
<keyword id="KW-0134">Cell wall</keyword>
<keyword id="KW-0472">Membrane</keyword>
<keyword id="KW-0964">Secreted</keyword>
<keyword id="KW-0732">Signal</keyword>
<keyword id="KW-0812">Transmembrane</keyword>
<keyword id="KW-1134">Transmembrane beta strand</keyword>
<gene>
    <name type="primary">pmp6</name>
    <name type="ordered locus">CPn_0444</name>
    <name type="ordered locus">CP_0309</name>
    <name type="ordered locus">CpB0460</name>
</gene>
<name>PMP6_CHLPN</name>
<protein>
    <recommendedName>
        <fullName>Probable outer membrane protein pmp6</fullName>
    </recommendedName>
    <alternativeName>
        <fullName>Polymorphic membrane protein 6</fullName>
    </alternativeName>
</protein>